<comment type="catalytic activity">
    <reaction evidence="1">
        <text>tRNA(Cys) + L-cysteine + ATP = L-cysteinyl-tRNA(Cys) + AMP + diphosphate</text>
        <dbReference type="Rhea" id="RHEA:17773"/>
        <dbReference type="Rhea" id="RHEA-COMP:9661"/>
        <dbReference type="Rhea" id="RHEA-COMP:9679"/>
        <dbReference type="ChEBI" id="CHEBI:30616"/>
        <dbReference type="ChEBI" id="CHEBI:33019"/>
        <dbReference type="ChEBI" id="CHEBI:35235"/>
        <dbReference type="ChEBI" id="CHEBI:78442"/>
        <dbReference type="ChEBI" id="CHEBI:78517"/>
        <dbReference type="ChEBI" id="CHEBI:456215"/>
        <dbReference type="EC" id="6.1.1.16"/>
    </reaction>
</comment>
<comment type="cofactor">
    <cofactor evidence="1">
        <name>Zn(2+)</name>
        <dbReference type="ChEBI" id="CHEBI:29105"/>
    </cofactor>
    <text evidence="1">Binds 1 zinc ion per subunit.</text>
</comment>
<comment type="subunit">
    <text evidence="1">Monomer.</text>
</comment>
<comment type="subcellular location">
    <subcellularLocation>
        <location evidence="1">Cytoplasm</location>
    </subcellularLocation>
</comment>
<comment type="similarity">
    <text evidence="1">Belongs to the class-I aminoacyl-tRNA synthetase family.</text>
</comment>
<accession>Q4A947</accession>
<feature type="chain" id="PRO_0000332860" description="Cysteine--tRNA ligase">
    <location>
        <begin position="1"/>
        <end position="406"/>
    </location>
</feature>
<feature type="short sequence motif" description="'HIGH' region">
    <location>
        <begin position="18"/>
        <end position="28"/>
    </location>
</feature>
<feature type="short sequence motif" description="'KMSKS' region">
    <location>
        <begin position="250"/>
        <end position="254"/>
    </location>
</feature>
<feature type="binding site" evidence="1">
    <location>
        <position position="16"/>
    </location>
    <ligand>
        <name>Zn(2+)</name>
        <dbReference type="ChEBI" id="CHEBI:29105"/>
    </ligand>
</feature>
<feature type="binding site" evidence="1">
    <location>
        <position position="192"/>
    </location>
    <ligand>
        <name>Zn(2+)</name>
        <dbReference type="ChEBI" id="CHEBI:29105"/>
    </ligand>
</feature>
<feature type="binding site" evidence="1">
    <location>
        <position position="218"/>
    </location>
    <ligand>
        <name>Zn(2+)</name>
        <dbReference type="ChEBI" id="CHEBI:29105"/>
    </ligand>
</feature>
<feature type="binding site" evidence="1">
    <location>
        <position position="222"/>
    </location>
    <ligand>
        <name>Zn(2+)</name>
        <dbReference type="ChEBI" id="CHEBI:29105"/>
    </ligand>
</feature>
<feature type="binding site" evidence="1">
    <location>
        <position position="253"/>
    </location>
    <ligand>
        <name>ATP</name>
        <dbReference type="ChEBI" id="CHEBI:30616"/>
    </ligand>
</feature>
<dbReference type="EC" id="6.1.1.16" evidence="1"/>
<dbReference type="EMBL" id="AE017243">
    <property type="protein sequence ID" value="AAZ44724.2"/>
    <property type="molecule type" value="Genomic_DNA"/>
</dbReference>
<dbReference type="SMR" id="Q4A947"/>
<dbReference type="KEGG" id="mhj:MHJ_0641"/>
<dbReference type="eggNOG" id="COG0215">
    <property type="taxonomic scope" value="Bacteria"/>
</dbReference>
<dbReference type="HOGENOM" id="CLU_013528_0_0_14"/>
<dbReference type="Proteomes" id="UP000000548">
    <property type="component" value="Chromosome"/>
</dbReference>
<dbReference type="GO" id="GO:0005829">
    <property type="term" value="C:cytosol"/>
    <property type="evidence" value="ECO:0007669"/>
    <property type="project" value="TreeGrafter"/>
</dbReference>
<dbReference type="GO" id="GO:0005524">
    <property type="term" value="F:ATP binding"/>
    <property type="evidence" value="ECO:0007669"/>
    <property type="project" value="UniProtKB-UniRule"/>
</dbReference>
<dbReference type="GO" id="GO:0004817">
    <property type="term" value="F:cysteine-tRNA ligase activity"/>
    <property type="evidence" value="ECO:0007669"/>
    <property type="project" value="UniProtKB-UniRule"/>
</dbReference>
<dbReference type="GO" id="GO:0008270">
    <property type="term" value="F:zinc ion binding"/>
    <property type="evidence" value="ECO:0007669"/>
    <property type="project" value="UniProtKB-UniRule"/>
</dbReference>
<dbReference type="GO" id="GO:0006423">
    <property type="term" value="P:cysteinyl-tRNA aminoacylation"/>
    <property type="evidence" value="ECO:0007669"/>
    <property type="project" value="UniProtKB-UniRule"/>
</dbReference>
<dbReference type="Gene3D" id="3.40.50.620">
    <property type="entry name" value="HUPs"/>
    <property type="match status" value="1"/>
</dbReference>
<dbReference type="HAMAP" id="MF_00041">
    <property type="entry name" value="Cys_tRNA_synth"/>
    <property type="match status" value="1"/>
</dbReference>
<dbReference type="InterPro" id="IPR015803">
    <property type="entry name" value="Cys-tRNA-ligase"/>
</dbReference>
<dbReference type="InterPro" id="IPR024909">
    <property type="entry name" value="Cys-tRNA/MSH_ligase"/>
</dbReference>
<dbReference type="InterPro" id="IPR014729">
    <property type="entry name" value="Rossmann-like_a/b/a_fold"/>
</dbReference>
<dbReference type="InterPro" id="IPR032678">
    <property type="entry name" value="tRNA-synt_1_cat_dom"/>
</dbReference>
<dbReference type="PANTHER" id="PTHR10890:SF3">
    <property type="entry name" value="CYSTEINE--TRNA LIGASE, CYTOPLASMIC"/>
    <property type="match status" value="1"/>
</dbReference>
<dbReference type="PANTHER" id="PTHR10890">
    <property type="entry name" value="CYSTEINYL-TRNA SYNTHETASE"/>
    <property type="match status" value="1"/>
</dbReference>
<dbReference type="Pfam" id="PF01406">
    <property type="entry name" value="tRNA-synt_1e"/>
    <property type="match status" value="1"/>
</dbReference>
<dbReference type="PRINTS" id="PR00983">
    <property type="entry name" value="TRNASYNTHCYS"/>
</dbReference>
<dbReference type="SUPFAM" id="SSF52374">
    <property type="entry name" value="Nucleotidylyl transferase"/>
    <property type="match status" value="1"/>
</dbReference>
<keyword id="KW-0030">Aminoacyl-tRNA synthetase</keyword>
<keyword id="KW-0067">ATP-binding</keyword>
<keyword id="KW-0963">Cytoplasm</keyword>
<keyword id="KW-0436">Ligase</keyword>
<keyword id="KW-0479">Metal-binding</keyword>
<keyword id="KW-0547">Nucleotide-binding</keyword>
<keyword id="KW-0648">Protein biosynthesis</keyword>
<keyword id="KW-0862">Zinc</keyword>
<name>SYC_MESHJ</name>
<sequence>MTMNLINKKNLNIYLCGPTVYSDVHIGNLRTIIIFDAIFECLKNKGFSINFLHNITDIDDKIIEKAQELGISEAELTEKYTNEYFKILEIFNIKKPTKIVKVTEKIEKIIEYIKLLEKKGFTYYNKNNDLVFDILKIPNYGIISGQKIESLLDKNTKKTKSKNDFVLWKKTQKGLFFKSLFGLGRPGWHTECAALIYDYFQKKSLDLHGGGVDLIFPHHENENAQHFALTGNPIAENWFRSGFVNLNGKKMAKSLNNVLLAKNFSHKYNPDIIRSIFLSINPTVPINLTEELIKNHKKLIEKYQKICFEWYFDKKNEKTEKVEQVLNLFIEGKFAKANFLIMELIKQKENSTIRKIFLNLRFNFTKMRLDPESQEKIKNWNKLIMDKNYSEADKIREELWKIFKNS</sequence>
<organism>
    <name type="scientific">Mesomycoplasma hyopneumoniae (strain J / ATCC 25934 / NCTC 10110)</name>
    <name type="common">Mycoplasma hyopneumoniae</name>
    <dbReference type="NCBI Taxonomy" id="262719"/>
    <lineage>
        <taxon>Bacteria</taxon>
        <taxon>Bacillati</taxon>
        <taxon>Mycoplasmatota</taxon>
        <taxon>Mycoplasmoidales</taxon>
        <taxon>Metamycoplasmataceae</taxon>
        <taxon>Mesomycoplasma</taxon>
    </lineage>
</organism>
<gene>
    <name evidence="1" type="primary">cysS</name>
    <name type="ordered locus">MHJ_0641</name>
</gene>
<protein>
    <recommendedName>
        <fullName evidence="1">Cysteine--tRNA ligase</fullName>
        <ecNumber evidence="1">6.1.1.16</ecNumber>
    </recommendedName>
    <alternativeName>
        <fullName evidence="1">Cysteinyl-tRNA synthetase</fullName>
        <shortName evidence="1">CysRS</shortName>
    </alternativeName>
</protein>
<evidence type="ECO:0000255" key="1">
    <source>
        <dbReference type="HAMAP-Rule" id="MF_00041"/>
    </source>
</evidence>
<reference key="1">
    <citation type="journal article" date="2005" name="J. Bacteriol.">
        <title>Swine and poultry pathogens: the complete genome sequences of two strains of Mycoplasma hyopneumoniae and a strain of Mycoplasma synoviae.</title>
        <authorList>
            <person name="Vasconcelos A.T.R."/>
            <person name="Ferreira H.B."/>
            <person name="Bizarro C.V."/>
            <person name="Bonatto S.L."/>
            <person name="Carvalho M.O."/>
            <person name="Pinto P.M."/>
            <person name="Almeida D.F."/>
            <person name="Almeida L.G.P."/>
            <person name="Almeida R."/>
            <person name="Alves-Junior L."/>
            <person name="Assuncao E.N."/>
            <person name="Azevedo V.A.C."/>
            <person name="Bogo M.R."/>
            <person name="Brigido M.M."/>
            <person name="Brocchi M."/>
            <person name="Burity H.A."/>
            <person name="Camargo A.A."/>
            <person name="Camargo S.S."/>
            <person name="Carepo M.S."/>
            <person name="Carraro D.M."/>
            <person name="de Mattos Cascardo J.C."/>
            <person name="Castro L.A."/>
            <person name="Cavalcanti G."/>
            <person name="Chemale G."/>
            <person name="Collevatti R.G."/>
            <person name="Cunha C.W."/>
            <person name="Dallagiovanna B."/>
            <person name="Dambros B.P."/>
            <person name="Dellagostin O.A."/>
            <person name="Falcao C."/>
            <person name="Fantinatti-Garboggini F."/>
            <person name="Felipe M.S.S."/>
            <person name="Fiorentin L."/>
            <person name="Franco G.R."/>
            <person name="Freitas N.S.A."/>
            <person name="Frias D."/>
            <person name="Grangeiro T.B."/>
            <person name="Grisard E.C."/>
            <person name="Guimaraes C.T."/>
            <person name="Hungria M."/>
            <person name="Jardim S.N."/>
            <person name="Krieger M.A."/>
            <person name="Laurino J.P."/>
            <person name="Lima L.F.A."/>
            <person name="Lopes M.I."/>
            <person name="Loreto E.L.S."/>
            <person name="Madeira H.M.F."/>
            <person name="Manfio G.P."/>
            <person name="Maranhao A.Q."/>
            <person name="Martinkovics C.T."/>
            <person name="Medeiros S.R.B."/>
            <person name="Moreira M.A.M."/>
            <person name="Neiva M."/>
            <person name="Ramalho-Neto C.E."/>
            <person name="Nicolas M.F."/>
            <person name="Oliveira S.C."/>
            <person name="Paixao R.F.C."/>
            <person name="Pedrosa F.O."/>
            <person name="Pena S.D.J."/>
            <person name="Pereira M."/>
            <person name="Pereira-Ferrari L."/>
            <person name="Piffer I."/>
            <person name="Pinto L.S."/>
            <person name="Potrich D.P."/>
            <person name="Salim A.C.M."/>
            <person name="Santos F.R."/>
            <person name="Schmitt R."/>
            <person name="Schneider M.P.C."/>
            <person name="Schrank A."/>
            <person name="Schrank I.S."/>
            <person name="Schuck A.F."/>
            <person name="Seuanez H.N."/>
            <person name="Silva D.W."/>
            <person name="Silva R."/>
            <person name="Silva S.C."/>
            <person name="Soares C.M.A."/>
            <person name="Souza K.R.L."/>
            <person name="Souza R.C."/>
            <person name="Staats C.C."/>
            <person name="Steffens M.B.R."/>
            <person name="Teixeira S.M.R."/>
            <person name="Urmenyi T.P."/>
            <person name="Vainstein M.H."/>
            <person name="Zuccherato L.W."/>
            <person name="Simpson A.J.G."/>
            <person name="Zaha A."/>
        </authorList>
    </citation>
    <scope>NUCLEOTIDE SEQUENCE [LARGE SCALE GENOMIC DNA]</scope>
    <source>
        <strain>J / ATCC 25934 / NCTC 10110</strain>
    </source>
</reference>
<proteinExistence type="inferred from homology"/>